<organism>
    <name type="scientific">Papaver somniferum</name>
    <name type="common">Opium poppy</name>
    <dbReference type="NCBI Taxonomy" id="3469"/>
    <lineage>
        <taxon>Eukaryota</taxon>
        <taxon>Viridiplantae</taxon>
        <taxon>Streptophyta</taxon>
        <taxon>Embryophyta</taxon>
        <taxon>Tracheophyta</taxon>
        <taxon>Spermatophyta</taxon>
        <taxon>Magnoliopsida</taxon>
        <taxon>Ranunculales</taxon>
        <taxon>Papaveraceae</taxon>
        <taxon>Papaveroideae</taxon>
        <taxon>Papaver</taxon>
    </lineage>
</organism>
<name>TYDC_PAPSO</name>
<proteinExistence type="evidence at protein level"/>
<gene>
    <name evidence="5" type="primary">TYDC</name>
    <name evidence="8" type="synonym">TYDC9</name>
    <name evidence="9" type="ORF">C5167_008148</name>
</gene>
<comment type="function">
    <text evidence="1 2">Tyrosine decarboxylase that converts tyrosine into tyramine, a precursor of isoquinoline alkaloids and various amides.</text>
</comment>
<comment type="catalytic activity">
    <reaction evidence="1">
        <text>L-tyrosine + H(+) = tyramine + CO2</text>
        <dbReference type="Rhea" id="RHEA:14345"/>
        <dbReference type="ChEBI" id="CHEBI:15378"/>
        <dbReference type="ChEBI" id="CHEBI:16526"/>
        <dbReference type="ChEBI" id="CHEBI:58315"/>
        <dbReference type="ChEBI" id="CHEBI:327995"/>
        <dbReference type="EC" id="4.1.1.25"/>
    </reaction>
    <physiologicalReaction direction="left-to-right" evidence="1">
        <dbReference type="Rhea" id="RHEA:14346"/>
    </physiologicalReaction>
</comment>
<comment type="cofactor">
    <cofactor evidence="1">
        <name>pyridoxal 5'-phosphate</name>
        <dbReference type="ChEBI" id="CHEBI:597326"/>
    </cofactor>
</comment>
<comment type="subunit">
    <text evidence="4">Homodimer.</text>
</comment>
<comment type="tissue specificity">
    <text evidence="3">Mainly expressed in roots, stems and capsule walls.</text>
</comment>
<comment type="developmental stage">
    <text evidence="3">In roots, observed at high levels at the rosette stage and remains expressed during all development stages (PubMed:29872026). Particularly observed in stems of budding plants (PubMed:29872026). Accumulates in the wall of capsules at all stages (PubMed:29872026).</text>
</comment>
<comment type="biotechnology">
    <text evidence="4">Yeast engineered to express TYDC mutant Y350F together with Pseudomonas putida DDC (PpDDC), Beta vulgaris L-tyrosine hydroxylase (BvTyH) and Papaver somniferum (S)-norcoclaurine synthase (PsNCS) accumulates (S)-norcoclaurine, an important precursor for the production of benzylisoquinoline alkaloids (BIA).</text>
</comment>
<comment type="similarity">
    <text evidence="7">Belongs to the group II decarboxylase family.</text>
</comment>
<accession>O82415</accession>
<accession>A0A3S7SKR6</accession>
<dbReference type="EC" id="4.1.1.25" evidence="1"/>
<dbReference type="EMBL" id="AF025433">
    <property type="protein sequence ID" value="AAC61842.1"/>
    <property type="molecule type" value="Genomic_DNA"/>
</dbReference>
<dbReference type="EMBL" id="MG748690">
    <property type="protein sequence ID" value="AYA72253.1"/>
    <property type="molecule type" value="mRNA"/>
</dbReference>
<dbReference type="EMBL" id="CM010720">
    <property type="protein sequence ID" value="RZC64467.1"/>
    <property type="molecule type" value="Genomic_DNA"/>
</dbReference>
<dbReference type="PDB" id="6EEM">
    <property type="method" value="X-ray"/>
    <property type="resolution" value="2.61 A"/>
    <property type="chains" value="A/B=1-512"/>
</dbReference>
<dbReference type="PDBsum" id="6EEM"/>
<dbReference type="SMR" id="O82415"/>
<dbReference type="STRING" id="3469.A0A3S7SKR6"/>
<dbReference type="EnsemblPlants" id="RZC64467">
    <property type="protein sequence ID" value="RZC64467"/>
    <property type="gene ID" value="C5167_008148"/>
</dbReference>
<dbReference type="Gramene" id="RZC64467">
    <property type="protein sequence ID" value="RZC64467"/>
    <property type="gene ID" value="C5167_008148"/>
</dbReference>
<dbReference type="OMA" id="ETIVCDW"/>
<dbReference type="OrthoDB" id="639767at2759"/>
<dbReference type="BRENDA" id="4.1.1.28">
    <property type="organism ID" value="4515"/>
</dbReference>
<dbReference type="Proteomes" id="UP000316621">
    <property type="component" value="Chromosome 6"/>
</dbReference>
<dbReference type="GO" id="GO:0005737">
    <property type="term" value="C:cytoplasm"/>
    <property type="evidence" value="ECO:0007669"/>
    <property type="project" value="TreeGrafter"/>
</dbReference>
<dbReference type="GO" id="GO:0030170">
    <property type="term" value="F:pyridoxal phosphate binding"/>
    <property type="evidence" value="ECO:0007669"/>
    <property type="project" value="InterPro"/>
</dbReference>
<dbReference type="GO" id="GO:0004837">
    <property type="term" value="F:tyrosine decarboxylase activity"/>
    <property type="evidence" value="ECO:0007669"/>
    <property type="project" value="UniProtKB-EC"/>
</dbReference>
<dbReference type="GO" id="GO:0006520">
    <property type="term" value="P:amino acid metabolic process"/>
    <property type="evidence" value="ECO:0007669"/>
    <property type="project" value="InterPro"/>
</dbReference>
<dbReference type="GO" id="GO:0019752">
    <property type="term" value="P:carboxylic acid metabolic process"/>
    <property type="evidence" value="ECO:0007669"/>
    <property type="project" value="InterPro"/>
</dbReference>
<dbReference type="CDD" id="cd06450">
    <property type="entry name" value="DOPA_deC_like"/>
    <property type="match status" value="1"/>
</dbReference>
<dbReference type="FunFam" id="1.20.1340.10:FF:000001">
    <property type="entry name" value="Histidine decarboxylase"/>
    <property type="match status" value="1"/>
</dbReference>
<dbReference type="FunFam" id="3.40.640.10:FF:000025">
    <property type="entry name" value="Histidine decarboxylase"/>
    <property type="match status" value="1"/>
</dbReference>
<dbReference type="Gene3D" id="3.90.1150.10">
    <property type="entry name" value="Aspartate Aminotransferase, domain 1"/>
    <property type="match status" value="1"/>
</dbReference>
<dbReference type="Gene3D" id="1.20.1340.10">
    <property type="entry name" value="dopa decarboxylase, N-terminal domain"/>
    <property type="match status" value="1"/>
</dbReference>
<dbReference type="Gene3D" id="3.40.640.10">
    <property type="entry name" value="Type I PLP-dependent aspartate aminotransferase-like (Major domain)"/>
    <property type="match status" value="1"/>
</dbReference>
<dbReference type="InterPro" id="IPR010977">
    <property type="entry name" value="Aromatic_deC"/>
</dbReference>
<dbReference type="InterPro" id="IPR002129">
    <property type="entry name" value="PyrdxlP-dep_de-COase"/>
</dbReference>
<dbReference type="InterPro" id="IPR015424">
    <property type="entry name" value="PyrdxlP-dep_Trfase"/>
</dbReference>
<dbReference type="InterPro" id="IPR015421">
    <property type="entry name" value="PyrdxlP-dep_Trfase_major"/>
</dbReference>
<dbReference type="InterPro" id="IPR015422">
    <property type="entry name" value="PyrdxlP-dep_Trfase_small"/>
</dbReference>
<dbReference type="InterPro" id="IPR021115">
    <property type="entry name" value="Pyridoxal-P_BS"/>
</dbReference>
<dbReference type="PANTHER" id="PTHR11999">
    <property type="entry name" value="GROUP II PYRIDOXAL-5-PHOSPHATE DECARBOXYLASE"/>
    <property type="match status" value="1"/>
</dbReference>
<dbReference type="PANTHER" id="PTHR11999:SF96">
    <property type="entry name" value="TYROSINE DECARBOXYLASE"/>
    <property type="match status" value="1"/>
</dbReference>
<dbReference type="Pfam" id="PF00282">
    <property type="entry name" value="Pyridoxal_deC"/>
    <property type="match status" value="1"/>
</dbReference>
<dbReference type="PRINTS" id="PR00800">
    <property type="entry name" value="YHDCRBOXLASE"/>
</dbReference>
<dbReference type="SUPFAM" id="SSF53383">
    <property type="entry name" value="PLP-dependent transferases"/>
    <property type="match status" value="1"/>
</dbReference>
<dbReference type="PROSITE" id="PS00392">
    <property type="entry name" value="DDC_GAD_HDC_YDC"/>
    <property type="match status" value="1"/>
</dbReference>
<evidence type="ECO:0000269" key="1">
    <source>
    </source>
</evidence>
<evidence type="ECO:0000269" key="2">
    <source>
    </source>
</evidence>
<evidence type="ECO:0000269" key="3">
    <source>
    </source>
</evidence>
<evidence type="ECO:0000269" key="4">
    <source>
    </source>
</evidence>
<evidence type="ECO:0000303" key="5">
    <source>
    </source>
</evidence>
<evidence type="ECO:0000303" key="6">
    <source>
    </source>
</evidence>
<evidence type="ECO:0000305" key="7"/>
<evidence type="ECO:0000312" key="8">
    <source>
        <dbReference type="EMBL" id="AAC61842.1"/>
    </source>
</evidence>
<evidence type="ECO:0000312" key="9">
    <source>
        <dbReference type="EMBL" id="RZC64467.1"/>
    </source>
</evidence>
<evidence type="ECO:0007744" key="10">
    <source>
        <dbReference type="PDB" id="6EEM"/>
    </source>
</evidence>
<evidence type="ECO:0007829" key="11">
    <source>
        <dbReference type="PDB" id="6EEM"/>
    </source>
</evidence>
<reference key="1">
    <citation type="journal article" date="1998" name="Plant Physiol.">
        <title>Expression patterns conferred by tyrosine/dihydroxyphenylalanine decarboxylase promoters from opium poppy are conserved in transgenic tobacco.</title>
        <authorList>
            <person name="Facchini P.J."/>
            <person name="Penzes-Yost C."/>
            <person name="Samanani N."/>
            <person name="Kowalchuk B."/>
        </authorList>
    </citation>
    <scope>NUCLEOTIDE SEQUENCE [GENOMIC DNA]</scope>
    <source>
        <strain>cv. Marianne</strain>
    </source>
</reference>
<reference key="2">
    <citation type="journal article" date="2020" name="Proc. Natl. Acad. Sci. U.S.A.">
        <title>Structural basis for divergent and convergent evolution of catalytic machineries in plant aromatic amino acid decarboxylase proteins.</title>
        <authorList>
            <person name="Torrens-Spence M.P."/>
            <person name="Chiang Y.-C."/>
            <person name="Smith T."/>
            <person name="Vicent M.A."/>
            <person name="Wang Y."/>
            <person name="Weng J.-K."/>
        </authorList>
    </citation>
    <scope>NUCLEOTIDE SEQUENCE [MRNA]</scope>
    <scope>X-RAY CRYSTALLOGRAPHY (2.61 ANGSTROMS) IN COMPLEX WITH L-TYROSINE AND PYRIDOXAL PHOSPHATE</scope>
    <scope>SUBUNIT</scope>
    <scope>MUTAGENESIS OF HIS-205 AND TYR-350</scope>
    <scope>BIOTECHNOLOGY</scope>
</reference>
<reference key="3">
    <citation type="journal article" date="2018" name="Science">
        <title>The opium poppy genome and morphinan production.</title>
        <authorList>
            <person name="Guo L."/>
            <person name="Winzer T."/>
            <person name="Yang X."/>
            <person name="Li Y."/>
            <person name="Ning Z."/>
            <person name="He Z."/>
            <person name="Teodor R."/>
            <person name="Lu Y."/>
            <person name="Bowser T.A."/>
            <person name="Graham I.A."/>
            <person name="Ye K."/>
        </authorList>
    </citation>
    <scope>NUCLEOTIDE SEQUENCE [LARGE SCALE GENOMIC DNA]</scope>
    <source>
        <strain>cv. HN1</strain>
    </source>
</reference>
<reference key="4">
    <citation type="journal article" date="2013" name="J. Biol. Chem.">
        <title>Biochemical evaluation of the decarboxylation and decarboxylation-deamination activities of plant aromatic amino acid decarboxylases.</title>
        <authorList>
            <person name="Torrens-Spence M.P."/>
            <person name="Liu P."/>
            <person name="Ding H."/>
            <person name="Harich K."/>
            <person name="Gillaspy G."/>
            <person name="Li J."/>
        </authorList>
    </citation>
    <scope>FUNCTION</scope>
    <scope>CATALYTIC ACTIVITY</scope>
    <scope>COFACTOR</scope>
    <scope>MUTAGENESIS OF TYR-350</scope>
</reference>
<reference key="5">
    <citation type="journal article" date="2014" name="Phytochemistry">
        <title>Investigation of a substrate-specifying residue within Papaver somniferum and Catharanthus roseus aromatic amino acid decarboxylases.</title>
        <authorList>
            <person name="Torrens-Spence M.P."/>
            <person name="Lazear M."/>
            <person name="von Guggenberg R."/>
            <person name="Ding H."/>
            <person name="Li J."/>
        </authorList>
    </citation>
    <scope>FUNCTION</scope>
    <scope>MUTAGENESIS OF SER-101; CYS-170; ASN-318; ALA-319 AND SER-372</scope>
</reference>
<reference key="6">
    <citation type="journal article" date="2018" name="J. Biosci.">
        <title>Spatiotemporal oscillations of morphinan alkaloids in opium poppy.</title>
        <authorList>
            <person name="Rezaei M."/>
            <person name="Naghavi M.R."/>
            <person name="Hosseinzadeh A."/>
            <person name="Abasi A."/>
            <person name="Nasiri J."/>
        </authorList>
    </citation>
    <scope>TISSUE SPECIFICITY</scope>
    <scope>DEVELOPMENTAL STAGE</scope>
</reference>
<keyword id="KW-0002">3D-structure</keyword>
<keyword id="KW-0210">Decarboxylase</keyword>
<keyword id="KW-0456">Lyase</keyword>
<keyword id="KW-0663">Pyridoxal phosphate</keyword>
<keyword id="KW-1185">Reference proteome</keyword>
<sequence length="512" mass="56555">MGSLPTNNLESISLCSQNPLDPDEFRRQGHMIIDFLADYYKNVEKYPVRSQVEPGYLKKRLPESAPYNPESIETILEDVTNDIIPGLTHWQSPNYFAYFPSSGSIAGFLGEMLSTGFNVVGFNWMSSPAATELESIVMNWLGQMLTLPKSFLFSSDGSSGGGGVLQGTTCEAILCTLTAARDKMLNKIGRENINKLVVYASDQTHCALQKAAQIAGINPKNVRAIKTSKATNFGLSPNSLQSAILADIESGLVPLFLCATVGTTSSTAVDPIGPLCAVAKLYGIWVHIDAAYAGSACICPEFRHFIDGVEDADSFSLNAHKWFFTTLDCCCLWVKDSDSLVKALSTSPEYLKNKATESKQVIDYKDWQIALSRRFRSMKLWLVLRSYGVANLRTFLRSHVKMAKHFQGLIGMDNRFEIVVPRTFAMVCFRLKPTAIFKQKIVDNDYIEDQTNEVNVKLLESVNASGKIYMTHAVVGGVYMIRFAVGATLTEERHVTGAWKVVQEHTDAILGA</sequence>
<feature type="chain" id="PRO_0000450477" description="Tyrosine decarboxylase">
    <location>
        <begin position="1"/>
        <end position="512"/>
    </location>
</feature>
<feature type="binding site" evidence="4 10">
    <location>
        <position position="100"/>
    </location>
    <ligand>
        <name>L-tyrosine</name>
        <dbReference type="ChEBI" id="CHEBI:58315"/>
    </ligand>
</feature>
<feature type="binding site" evidence="4 10">
    <location>
        <position position="205"/>
    </location>
    <ligand>
        <name>L-tyrosine</name>
        <dbReference type="ChEBI" id="CHEBI:58315"/>
    </ligand>
</feature>
<feature type="binding site" evidence="4 10">
    <location>
        <position position="320"/>
    </location>
    <ligand>
        <name>L-tyrosine</name>
        <dbReference type="ChEBI" id="CHEBI:58315"/>
    </ligand>
</feature>
<feature type="binding site" evidence="4 10">
    <location>
        <position position="350"/>
    </location>
    <ligand>
        <name>L-tyrosine</name>
        <dbReference type="ChEBI" id="CHEBI:58315"/>
    </ligand>
</feature>
<feature type="modified residue" description="N6-(pyridoxal phosphate)lysine" evidence="4">
    <location>
        <position position="321"/>
    </location>
</feature>
<feature type="mutagenesis site" description="No effect on catalytic activity." evidence="2">
    <original>S</original>
    <variation>A</variation>
    <location>
        <position position="101"/>
    </location>
</feature>
<feature type="mutagenesis site" description="No effect on catalytic activity." evidence="2">
    <original>C</original>
    <variation>S</variation>
    <location>
        <position position="170"/>
    </location>
</feature>
<feature type="mutagenesis site" description="Acquires the capacity to produce 4-hydroxyphenylacetaldehyde from L-tyrosine." evidence="4">
    <original>H</original>
    <variation>N</variation>
    <location>
        <position position="205"/>
    </location>
</feature>
<feature type="mutagenesis site" description="No effect on catalytic activity." evidence="2">
    <original>N</original>
    <variation>S</variation>
    <location>
        <position position="318"/>
    </location>
</feature>
<feature type="mutagenesis site" description="No effect on catalytic activity." evidence="2">
    <original>A</original>
    <variation>P</variation>
    <location>
        <position position="319"/>
    </location>
</feature>
<feature type="mutagenesis site" description="Acquires the capacity to produce 4-hydroxyphenylacetaldehyde from L-tyrosine." evidence="1 4">
    <original>Y</original>
    <variation>F</variation>
    <location>
        <position position="350"/>
    </location>
</feature>
<feature type="mutagenesis site" description="Acquires the capacity to produce 5-hydroxytryptamine from 5-hydroxytryptophan.">
    <original>S</original>
    <variation>G</variation>
    <location>
        <position position="372"/>
    </location>
</feature>
<feature type="sequence conflict" description="In Ref. 1; AAC61842." ref="1">
    <original>K</original>
    <variation>N</variation>
    <location>
        <position position="45"/>
    </location>
</feature>
<feature type="sequence conflict" description="In Ref. 1; AAC61842." ref="1">
    <original>D</original>
    <variation>N</variation>
    <location>
        <position position="202"/>
    </location>
</feature>
<feature type="sequence conflict" description="In Ref. 1; AAC61842." ref="1">
    <original>P</original>
    <variation>A</variation>
    <location>
        <position position="348"/>
    </location>
</feature>
<feature type="sequence conflict" description="In Ref. 1; AAC61842." ref="1">
    <original>I</original>
    <variation>M</variation>
    <location>
        <position position="410"/>
    </location>
</feature>
<feature type="sequence conflict" description="In Ref. 1; AAC61842." ref="1">
    <original>T</original>
    <variation>A</variation>
    <location>
        <position position="434"/>
    </location>
</feature>
<feature type="sequence conflict" description="In Ref. 1; AAC61842." ref="1">
    <original>V</original>
    <variation>A</variation>
    <location>
        <position position="456"/>
    </location>
</feature>
<feature type="helix" evidence="11">
    <location>
        <begin position="22"/>
        <end position="42"/>
    </location>
</feature>
<feature type="helix" evidence="11">
    <location>
        <begin position="43"/>
        <end position="45"/>
    </location>
</feature>
<feature type="helix" evidence="11">
    <location>
        <begin position="56"/>
        <end position="60"/>
    </location>
</feature>
<feature type="helix" evidence="11">
    <location>
        <begin position="72"/>
        <end position="82"/>
    </location>
</feature>
<feature type="helix" evidence="11">
    <location>
        <begin position="84"/>
        <end position="86"/>
    </location>
</feature>
<feature type="strand" evidence="11">
    <location>
        <begin position="97"/>
        <end position="99"/>
    </location>
</feature>
<feature type="helix" evidence="11">
    <location>
        <begin position="105"/>
        <end position="117"/>
    </location>
</feature>
<feature type="strand" evidence="11">
    <location>
        <begin position="122"/>
        <end position="124"/>
    </location>
</feature>
<feature type="helix" evidence="11">
    <location>
        <begin position="128"/>
        <end position="145"/>
    </location>
</feature>
<feature type="helix" evidence="11">
    <location>
        <begin position="149"/>
        <end position="151"/>
    </location>
</feature>
<feature type="strand" evidence="11">
    <location>
        <begin position="162"/>
        <end position="167"/>
    </location>
</feature>
<feature type="helix" evidence="11">
    <location>
        <begin position="169"/>
        <end position="188"/>
    </location>
</feature>
<feature type="helix" evidence="11">
    <location>
        <begin position="190"/>
        <end position="195"/>
    </location>
</feature>
<feature type="strand" evidence="11">
    <location>
        <begin position="196"/>
        <end position="201"/>
    </location>
</feature>
<feature type="helix" evidence="11">
    <location>
        <begin position="206"/>
        <end position="214"/>
    </location>
</feature>
<feature type="helix" evidence="11">
    <location>
        <begin position="219"/>
        <end position="221"/>
    </location>
</feature>
<feature type="strand" evidence="11">
    <location>
        <begin position="222"/>
        <end position="225"/>
    </location>
</feature>
<feature type="helix" evidence="11">
    <location>
        <begin position="229"/>
        <end position="231"/>
    </location>
</feature>
<feature type="helix" evidence="11">
    <location>
        <begin position="237"/>
        <end position="249"/>
    </location>
</feature>
<feature type="strand" evidence="11">
    <location>
        <begin position="253"/>
        <end position="262"/>
    </location>
</feature>
<feature type="turn" evidence="11">
    <location>
        <begin position="264"/>
        <end position="266"/>
    </location>
</feature>
<feature type="helix" evidence="11">
    <location>
        <begin position="272"/>
        <end position="280"/>
    </location>
</feature>
<feature type="turn" evidence="11">
    <location>
        <begin position="281"/>
        <end position="283"/>
    </location>
</feature>
<feature type="strand" evidence="11">
    <location>
        <begin position="285"/>
        <end position="289"/>
    </location>
</feature>
<feature type="helix" evidence="11">
    <location>
        <begin position="293"/>
        <end position="298"/>
    </location>
</feature>
<feature type="helix" evidence="11">
    <location>
        <begin position="300"/>
        <end position="303"/>
    </location>
</feature>
<feature type="helix" evidence="11">
    <location>
        <begin position="304"/>
        <end position="306"/>
    </location>
</feature>
<feature type="helix" evidence="11">
    <location>
        <begin position="309"/>
        <end position="311"/>
    </location>
</feature>
<feature type="strand" evidence="11">
    <location>
        <begin position="312"/>
        <end position="318"/>
    </location>
</feature>
<feature type="helix" evidence="11">
    <location>
        <begin position="319"/>
        <end position="322"/>
    </location>
</feature>
<feature type="strand" evidence="11">
    <location>
        <begin position="330"/>
        <end position="335"/>
    </location>
</feature>
<feature type="helix" evidence="11">
    <location>
        <begin position="337"/>
        <end position="344"/>
    </location>
</feature>
<feature type="turn" evidence="11">
    <location>
        <begin position="350"/>
        <end position="352"/>
    </location>
</feature>
<feature type="helix" evidence="11">
    <location>
        <begin position="364"/>
        <end position="367"/>
    </location>
</feature>
<feature type="helix" evidence="11">
    <location>
        <begin position="377"/>
        <end position="387"/>
    </location>
</feature>
<feature type="helix" evidence="11">
    <location>
        <begin position="389"/>
        <end position="411"/>
    </location>
</feature>
<feature type="strand" evidence="11">
    <location>
        <begin position="416"/>
        <end position="420"/>
    </location>
</feature>
<feature type="strand" evidence="11">
    <location>
        <begin position="424"/>
        <end position="431"/>
    </location>
</feature>
<feature type="helix" evidence="11">
    <location>
        <begin position="433"/>
        <end position="435"/>
    </location>
</feature>
<feature type="helix" evidence="11">
    <location>
        <begin position="445"/>
        <end position="465"/>
    </location>
</feature>
<feature type="strand" evidence="11">
    <location>
        <begin position="472"/>
        <end position="475"/>
    </location>
</feature>
<feature type="strand" evidence="11">
    <location>
        <begin position="478"/>
        <end position="484"/>
    </location>
</feature>
<feature type="helix" evidence="11">
    <location>
        <begin position="492"/>
        <end position="509"/>
    </location>
</feature>
<protein>
    <recommendedName>
        <fullName evidence="5">Tyrosine decarboxylase</fullName>
        <shortName evidence="5 6">PsTyDC</shortName>
        <ecNumber evidence="1">4.1.1.25</ecNumber>
    </recommendedName>
</protein>